<name>LEC2_MEDTR</name>
<accession>Q01807</accession>
<feature type="signal peptide" evidence="2">
    <location>
        <begin position="1"/>
        <end position="26"/>
    </location>
</feature>
<feature type="chain" id="PRO_0000017622" description="Truncated lectin 2">
    <location>
        <begin position="27"/>
        <end position="280"/>
    </location>
</feature>
<feature type="binding site" evidence="1">
    <location>
        <position position="148"/>
    </location>
    <ligand>
        <name>Mn(2+)</name>
        <dbReference type="ChEBI" id="CHEBI:29035"/>
    </ligand>
</feature>
<feature type="binding site" evidence="1">
    <location>
        <position position="150"/>
    </location>
    <ligand>
        <name>Ca(2+)</name>
        <dbReference type="ChEBI" id="CHEBI:29108"/>
    </ligand>
</feature>
<feature type="binding site" evidence="1">
    <location>
        <position position="150"/>
    </location>
    <ligand>
        <name>Mn(2+)</name>
        <dbReference type="ChEBI" id="CHEBI:29035"/>
    </ligand>
</feature>
<feature type="binding site" evidence="1">
    <location>
        <position position="152"/>
    </location>
    <ligand>
        <name>Ca(2+)</name>
        <dbReference type="ChEBI" id="CHEBI:29108"/>
    </ligand>
</feature>
<feature type="binding site" evidence="1">
    <location>
        <position position="154"/>
    </location>
    <ligand>
        <name>Ca(2+)</name>
        <dbReference type="ChEBI" id="CHEBI:29108"/>
    </ligand>
</feature>
<feature type="binding site" evidence="1">
    <location>
        <position position="158"/>
    </location>
    <ligand>
        <name>Ca(2+)</name>
        <dbReference type="ChEBI" id="CHEBI:29108"/>
    </ligand>
</feature>
<feature type="binding site" evidence="1">
    <location>
        <position position="158"/>
    </location>
    <ligand>
        <name>Mn(2+)</name>
        <dbReference type="ChEBI" id="CHEBI:29035"/>
    </ligand>
</feature>
<feature type="binding site" evidence="1">
    <location>
        <position position="170"/>
    </location>
    <ligand>
        <name>Mn(2+)</name>
        <dbReference type="ChEBI" id="CHEBI:29035"/>
    </ligand>
</feature>
<feature type="glycosylation site" description="N-linked (GlcNAc...) asparagine" evidence="2">
    <location>
        <position position="163"/>
    </location>
</feature>
<feature type="glycosylation site" description="N-linked (GlcNAc...) asparagine" evidence="2">
    <location>
        <position position="272"/>
    </location>
</feature>
<organism>
    <name type="scientific">Medicago truncatula</name>
    <name type="common">Barrel medic</name>
    <name type="synonym">Medicago tribuloides</name>
    <dbReference type="NCBI Taxonomy" id="3880"/>
    <lineage>
        <taxon>Eukaryota</taxon>
        <taxon>Viridiplantae</taxon>
        <taxon>Streptophyta</taxon>
        <taxon>Embryophyta</taxon>
        <taxon>Tracheophyta</taxon>
        <taxon>Spermatophyta</taxon>
        <taxon>Magnoliopsida</taxon>
        <taxon>eudicotyledons</taxon>
        <taxon>Gunneridae</taxon>
        <taxon>Pentapetalae</taxon>
        <taxon>rosids</taxon>
        <taxon>fabids</taxon>
        <taxon>Fabales</taxon>
        <taxon>Fabaceae</taxon>
        <taxon>Papilionoideae</taxon>
        <taxon>50 kb inversion clade</taxon>
        <taxon>NPAAA clade</taxon>
        <taxon>Hologalegina</taxon>
        <taxon>IRL clade</taxon>
        <taxon>Trifolieae</taxon>
        <taxon>Medicago</taxon>
    </lineage>
</organism>
<comment type="miscellaneous">
    <text>Lec2 is probably non functional, since a frameshift mutation leads to premature translation termination after only 98 AA. The sequence below ignores this frameshift mutation.</text>
</comment>
<comment type="miscellaneous">
    <text>Binds one manganese (or another transition metal) ion and one calcium ion. The metal ions are essential for the saccharide-binding and cell-agglutinating activities.</text>
</comment>
<comment type="similarity">
    <text evidence="3">Belongs to the leguminous lectin family.</text>
</comment>
<protein>
    <recommendedName>
        <fullName>Truncated lectin 2</fullName>
    </recommendedName>
</protein>
<keyword id="KW-0106">Calcium</keyword>
<keyword id="KW-0325">Glycoprotein</keyword>
<keyword id="KW-0430">Lectin</keyword>
<keyword id="KW-0464">Manganese</keyword>
<keyword id="KW-0479">Metal-binding</keyword>
<keyword id="KW-0732">Signal</keyword>
<sequence>MSSSNFSCILSISLTFFILLLNKVNSAETTSFSITKFVPDQKNLIFQGDAKTASTGKLELSKAVKNSIGRALYSAPIHIWDSKTGSVANFQTTFTFTITAPNTYNVADGLAFFIAPIDTKPKSIHHGGYLGVFDSKTYKKSIQTVAVEIDTFYNAQWDPNPGNISSTGRHIGIDVNSIKSISTVPWSLENNKKANVAIGFNGATNVLSVDVEYPLIRHYTLSHVVPLKDVVPEWVRIGFSSSTGAEYSAHDILSWSFDSKLNLGFENNINANVSSSTQAA</sequence>
<gene>
    <name type="primary">LEC2</name>
</gene>
<proteinExistence type="inferred from homology"/>
<dbReference type="EMBL" id="X60387">
    <property type="protein sequence ID" value="CAA42938.1"/>
    <property type="molecule type" value="Genomic_DNA"/>
</dbReference>
<dbReference type="SMR" id="Q01807"/>
<dbReference type="GlyCosmos" id="Q01807">
    <property type="glycosylation" value="2 sites, No reported glycans"/>
</dbReference>
<dbReference type="GO" id="GO:0030246">
    <property type="term" value="F:carbohydrate binding"/>
    <property type="evidence" value="ECO:0007669"/>
    <property type="project" value="UniProtKB-KW"/>
</dbReference>
<dbReference type="GO" id="GO:0046872">
    <property type="term" value="F:metal ion binding"/>
    <property type="evidence" value="ECO:0007669"/>
    <property type="project" value="UniProtKB-KW"/>
</dbReference>
<dbReference type="GO" id="GO:0009610">
    <property type="term" value="P:response to symbiotic fungus"/>
    <property type="evidence" value="ECO:0007669"/>
    <property type="project" value="UniProtKB-ARBA"/>
</dbReference>
<dbReference type="CDD" id="cd06899">
    <property type="entry name" value="lectin_legume_LecRK_Arcelin_ConA"/>
    <property type="match status" value="1"/>
</dbReference>
<dbReference type="Gene3D" id="2.60.120.200">
    <property type="match status" value="1"/>
</dbReference>
<dbReference type="InterPro" id="IPR013320">
    <property type="entry name" value="ConA-like_dom_sf"/>
</dbReference>
<dbReference type="InterPro" id="IPR016363">
    <property type="entry name" value="L-lectin"/>
</dbReference>
<dbReference type="InterPro" id="IPR000985">
    <property type="entry name" value="Lectin_LegA_CS"/>
</dbReference>
<dbReference type="InterPro" id="IPR019825">
    <property type="entry name" value="Lectin_legB_Mn/Ca_BS"/>
</dbReference>
<dbReference type="InterPro" id="IPR001220">
    <property type="entry name" value="Legume_lectin_dom"/>
</dbReference>
<dbReference type="InterPro" id="IPR050258">
    <property type="entry name" value="Leguminous_Lectin"/>
</dbReference>
<dbReference type="PANTHER" id="PTHR32401">
    <property type="entry name" value="CONCANAVALIN A-LIKE LECTIN FAMILY PROTEIN"/>
    <property type="match status" value="1"/>
</dbReference>
<dbReference type="PANTHER" id="PTHR32401:SF45">
    <property type="entry name" value="LECTIN"/>
    <property type="match status" value="1"/>
</dbReference>
<dbReference type="Pfam" id="PF00139">
    <property type="entry name" value="Lectin_legB"/>
    <property type="match status" value="1"/>
</dbReference>
<dbReference type="PIRSF" id="PIRSF002690">
    <property type="entry name" value="L-type_lectin_plant"/>
    <property type="match status" value="1"/>
</dbReference>
<dbReference type="SUPFAM" id="SSF49899">
    <property type="entry name" value="Concanavalin A-like lectins/glucanases"/>
    <property type="match status" value="1"/>
</dbReference>
<dbReference type="PROSITE" id="PS00308">
    <property type="entry name" value="LECTIN_LEGUME_ALPHA"/>
    <property type="match status" value="1"/>
</dbReference>
<dbReference type="PROSITE" id="PS00307">
    <property type="entry name" value="LECTIN_LEGUME_BETA"/>
    <property type="match status" value="1"/>
</dbReference>
<evidence type="ECO:0000250" key="1"/>
<evidence type="ECO:0000255" key="2"/>
<evidence type="ECO:0000305" key="3"/>
<reference key="1">
    <citation type="journal article" date="1992" name="Plant Mol. Biol.">
        <title>Lectin genes from the legume Medicago truncatula.</title>
        <authorList>
            <person name="Bauchrowitz M.A."/>
            <person name="Barker D.G."/>
            <person name="Nadaud I."/>
            <person name="Rouge P."/>
            <person name="Lescure B."/>
        </authorList>
    </citation>
    <scope>NUCLEOTIDE SEQUENCE [GENOMIC DNA]</scope>
    <source>
        <strain>cv. Jemalong</strain>
    </source>
</reference>